<sequence>MSVPPPGATPSRTSRTKGLKDRPRMENEEKLVEYLKRATTDLRQARRRLREVEDQQQEPVAIIGMSCRYPGDVHSPDDLWRMVADGDDGISTFPAERGWDVERLYDPDPDRPGTTYTTRGGFLHDAHLFDAEFFGISPREALATDPQQRLLLETSWEAFERAGIDPTSLRGSHTGVFAGVMYQDYAHRVRPVPEEFEGYLGNGSAGSIASGRVAYTFGLEGPAVTVDTACSSSLVALHLAVQSLRQGDSTLALAGGVAIMSTPDVFVEYSRQRGLAADGRCKAFAEAADGTGWAEGVGMLLLERLSDARRNGHPVLAVVRGSAVNQDGASSRLTAPNGPSQQRVIRQALANARLTPADVDVVEAHGTGTKLGDPIEAQALLATYGQDRPAERPLWLGSLKSNIGHTQAAAGVGGVIKMVMAIRHGVAPRTLHVDRPTPEVDWSAGAVELLTEARPWPETDRPRRAGVSAFGVSGTNAHVIIEQPPAIEGTGLGDDAPPTAEHPEERTPADGGPAPQPVAWPLSAKSPEALRDQARQLRHHLTSGATASALSHPLADIGHSLATTRTAFDHRVVVLGTDHDALLRSLAALADGGTDPSVVQGSVRGRGRVAFVFPGQGSQWEGMARELLDTSPVFARQMQACADALSAYVDWSLHDVLRGAPDAPGLDRVDVVQPVLWAIMISLSELWRAHGVQPSAVVGHSQGEIAAAYVAGALSLDDSARVVALRSKALRALSGKGGMLSVPLSEEDLTPQLAAHTGQLSIAAVNGPGSVVVSGDADALEGLFEELTAAGVRARKVAVDYASHSAHVEALREELLTRLGPVAPRPAKVPFYSTVTGERLAGTEALDADYWYRNLRETVRFEQATRALLAQNIGVFVETGPHPVLAVGLQETIDATGGSAVALGSLRRGEGGPDRFLRSLAEAYAHGAPLDWDLLFPGARRVELPTYAFQRDHYWLQIPEGGPADAAGLGLAAVEHPLLAAATSLADGDGLIVTGRLSTRSLPWLADHAVTGTVLLPGTAFVELALRAADLTDCHLLDELTLHTPLVVPDDDPVRVQVRVAAPDPATGRRALTVHARPESPDGDADQEEQGAEWTLHATGYLAVGAHEPAVPDQGQWPPAGATPLDVTDLYPRLADAGYGYGLAFQGLRAAWRLGDDVYAEAELPDEHSDQAGRYGLHPALLDAALHAAGFAGFPDGDGALPGPRLPFSWTGVTLSAVGARALRIRLARTGDDTLTVTLTDPAGEPVATVESLALRPLATNQAPRTPSDLHRVAYTPRDLPADASTAHWAVLDADDLAYALNLPSHPDRDALAALDPAPPVVLTGWPVPDDPAPQAARTVLARALHDIQDWLADDRLADTRLVVVTHNALPADDWQDTDPVAASLTGLLRTAQSENPGRLVLIDTDGHPASWQALPALVATGEPQAALRLGEARVPRLAPAATDAALSVPAAVPAATDASLPVPADTSAWRLAVESPGTLDHLTLIPWAAATAPLEEGQVRIAVRTCGVNFRDVLIALGMYPDPDMLGSEGAGRVVEVGPGVTDLAVGDRVAGILAGGFGPLAVIDAPKVARIPDSWTWEQAASVPLAFATAWYALVDLAALAPGEKVLVHAAAGGVGMAAVQIARHLGAEVYATASPAKWDTLRALGLDDDHIASSRDTAFAEKFPAVDVVLDSLAGEFVDASLRLLPHGGRFVEMGKTDRRDPERIAADHPGVHYRAFDLRESGDRRLREMLDEIFALVEDGTLHPLPYRSWDLRRAPEAFRHMQQARHIGKIVLTVPPALDPDGTVLVTGATGTLGALVTRHLVTEHGVRRLLLVSRSGPQAPGADALLADLAAAGAEATLTACDTADRDQLRAVLDAVPADHPLTAVIHTAGALDDGVLSALTPERLDAVLRPKADAAWHLHELTAGHDLAAFVLFSSAAGLFGNAGQGNYAAANAFLDALAQHRRALGLPATSLAWGLWEERGGMTGHLDTADVGRLSRTGVATLDSAHGLALFDAALSTGQTLLVPLPLDRAALHRQARTGSLPALLSGLVRTTPARRTATGTAATGSVGDTLARRLTAAAPADRDRIVNDLVRDHAAAVLGHGSATAVGLGRAFRDLGFDSLTAVELRNRLGAATGLRLPATLVFDHPTPEELAAHLRDTLLGAADSGAAAVVTTSAEADEPLAVVAMSCRFPGGTGSPEELWELLADGGDAIGALPADRGWDLAGLYHPDPDQPGTSYARHGGFLHDAGDFDASLFGISPREALAMDPQQRLLLETSWEAFERAGLDLRTLRGSRTGVYVGALPSSYGGTLHDAPDGLEGHLMTGNSTSIVSGRLAYTFGLQGPAVTVDTACSSSLVALHLAVQALRSGEVTMALVGGATVMSNPGGLIAFSRQRGLAADGRCKAFSAAADGMGMAEGVGMLLVERLSDAERLGHPVLAVVRGSAINQDGASNGLTAPNGPSQQRVIRDALADARLNASEVDVVEAHGTGTKLGDPIEAQALLATYGQDRPEERPVLLGSVKSNIGHTQAAAGVAGVIKMVLAMRHGLLPRTLHVDEPSTQIDWNAGALSLLAEETPWPETGRPRRAAVSSFGISGTNAHVILEQAPASVPAPASASVPGDSGEAPDPVVVPWVVSGRSADALRAQAGQLAAWADSAAGRDTEPVDVGRALATARSFLEHRAVVVGGDRAELVEALRALATDPAAGSTAADPDGPGGRLGLVFSGQGSQRPGMGRELYTAYPVFAAALDEVCGVLDEVMGAQPPSEGWTGSLREVMFEVSSDLLDETGFTQPALFAFEVALYRLLESWGVAGEVVAGHSVGEIAAAHVAGVLSLADACALVAARGRLMQALPSGGAMVAVEASEEEVAAVLAGRGDEGAGIGAVNAPGSVVVSGVEAAVEEVAARFAGLGRRTRRLKVSHAFHSPLMDPMLAEFRRVVEGLSFAPPRMTVVSTLTGAVASDEELCSVDYWVRHARETVRFGDAVRCMAGAEVDRFAEVGPSGVLAGLVRASVTGEGTRAAVALQRGNRTEPGALVSALGELFVSGLPVDWATYFAGRPLRRVELPTYAFQRARYWLEGAAGAGGRQSAADGQDEVDAAFWEAVEHGDLSALGAGLDVDGEARLADVLPALSSWRRRAEQASVVDAWRYRVTWAPLPEPARASATGVWLLLVPAGAEDAADATRTVEGALAEHGGEVVKVDVAHPEADEARTALAQQITEQFIERFGVTEIGRLRGVVSLLALADGDDPRHPSVSRGLALTLGLVQALGDMELTAPLWCLTRGAVAVDASDGVDGAVQAQVWGLGRAVALEHPDRWGGLVDLPEYVDPRTARRLTGVLTGTGAGAGAGGLGREDQIALRATGAFGCRLTRDTVAPAGDPGEWTLSGTVLVTGGTGAVGGHVARWLAARGAERLVLVSRRGPRAPGADALRDELTAAGAQVEMLACDLSDGSAVTALVAGLAAGGDLTAVVHAAGVLDDGVLASLSVERCAEVLAAKARAAHHLDLATRDVNLDAFVLFSSVSGVLGAAGQANYAAANAHLDAVALHRHALGLPAVSVAWGPWAEGGMAGEDAAAGRLSRDGWTAMAPEPAATAMARAVAAGHPAVMIADVDWQRFAPAYAAVRPGNSLLTGVPEARQAQPQPWSADGERSAWASRLAGLPEEEQRTALLDLVRGQVASVLGHASMQTIDPARAFKEIGFDSLTAVELRNRLNAATGLALPATLVFDYPTPVALAEYVGSQVLGTSSPAVTGPLVVAAVDEPVAIIGMSCRFPGGVQSPEELWDLVVGGRDAISSFPTDRGWDVDALFDPDPEKPGKTYTRHGAFLHDAAEFDPRFFGISPREASAMDPQQRLLLETAWEAFERAGIDPAALRGSATGVFTGTNGQDYATRLRETPQGVEGYLMTGNAGSVISGRLAYTFGLEGPAMTVDTACSASLVALHLAAQALRQGECSLALAGGATVMSTPGAFVEFSRQGGLAADGRCKAFSASADGTGWGEGVGLLLLERLSDAERNGHPVLAVVRGSAVNQDGASNGLTAPNGPSQQRVIRQALANARLSASEVDVVEAHGTGTRLGDPIEAQALLATYGQDRPEDRPLWLGSVKSNLGHTQAAAGVAGIIKSVMAMRHGVLPATLHVDEPTSEVDWSAGAVELLTEARPWPEVGRPRRAAVSGFGVSGTNAHVILEQAAETGSTSEEGPAALVPTVVWPISGRDEQALRGQARRLRERLVVEPGLSAADVGLSLATTRSCFEQRAVVVGETRDELLAGLEALAEGREASGLVRGSARGSVNVGFLFSGQGSQRVGMGRELAERFPVFAGVFGEVCGLLDPLLPRPLGEVIAAGPGVLGRTVFTQPALFAVEVAAARLLLSWGVRPQVVAGHSVGEIAAAHVAGVLSLEDACALVAARGRLMEALPAGGVMVALEATEGEVAELLEAHAGAPVGVAAVNGPRAVVVSGDASPVGEIADVVRSWGRRTKRLEVSHAFHSPLMEPMLAEFTEVVSGLEFAAPQIGFVSAVTGGLVGADVVSRPEYWVEHVAQPVRFADAVRAAVDEAGVSLFVEVGPGGALSAMGPDCLDETVGDKQPVVFVPSLRADRPEPLAVTTALATAHVNGVQPDWQAVFAGTGAARVELPTYAFQRGRYWLDASVGGTGDASAVGLATLEHPLLAGVVDLAEEDRTVFTGRLSLTTHPWLADHAVFGSVLLPGTGFVELALAAGQYTGFGHLDELTVHAPLVLPARGAVHVQLVLDGVDDSGRRALTVHSRPEGVAGEQTWTRHATGALTVAEAVDPPAVSAVWPPAGAIEVELDDPYERFAAEGYAYGPAFQGLRRVWRGDGELFAEVELGAQELEAAGRFGVHPALLDAALHPLLLADGSTGQDGDTPTAGRLPFSWTGVSLRATGATTARVTLAFTDGDAVRITVADGDGGLVASVDALVTRPIAAGQLAAGRSGLFEVEWAPVSSSPAGSASWAVVGGGEAGVSAGGPGLGSYEDLAALRRAMDSGAPVPEVVFAHCGGGAEAADVVGGTHTATHAALVSLREWLADERFAGARLAIVTGGAVAVRPGDEVSDLAGAAVWGLVRSAQSEHPGQFVLVDTDGAAEPSSAAAALATGEPQVAVRGGEVFVPRLARADRTPAADSGVRWDPDKSLLVTGASGVLAGLVVRHAVAEWAVRHVVLVSRSGADGLAQELAEAGVSVQQARCDVADREAVAAVLAGIPAEHRLGGVIHTAGVLDDGVIESLTPERLAPVLRPKVDGAWWLHELTADVDLSVFAVFSSAAGVFGAAGQGNYAAANAFLDALALYRHREGLPATSLSWGLWAERSGMAGQLADAQLERLERTGVHPLSSSEGLALLDAALATGRPWLVPVGLDLGVMRAQADLGVTPLFRGLVRAPLRRAQVDKAASNAPDELRRELAVASAADRERMVLDLVRDRTAVVLGFGSRDEVGVDSGFTSMGVDSLAGVDLRNRLSSATGLRLPTTLIFDYPTPAALARYLHTHLVDDAVDQVDIRSVLAELDRLEATLAQVQAGDVGHMKIASRLQDLVGQWHGSGGATPGEDTVTDLEEATADEIFSFIDDNFGSTEVH</sequence>
<protein>
    <recommendedName>
        <fullName evidence="11">Polyketide synthase GfsB</fullName>
        <ecNumber evidence="1">2.3.1.-</ecNumber>
    </recommendedName>
    <alternativeName>
        <fullName evidence="10">FD-891 synthase GfsB, modules 5 to 7</fullName>
    </alternativeName>
</protein>
<reference evidence="13" key="1">
    <citation type="journal article" date="2010" name="ChemBioChem">
        <title>Cloning and characterization of the biosynthetic gene cluster of 16-membered macrolide antibiotic FD-891: involvement of a dual functional cytochrome P450 monooxygenase catalyzing epoxidation and hydroxylation.</title>
        <authorList>
            <person name="Kudo F."/>
            <person name="Motegi A."/>
            <person name="Mizoue K."/>
            <person name="Eguchi T."/>
        </authorList>
    </citation>
    <scope>NUCLEOTIDE SEQUENCE [GENOMIC DNA]</scope>
    <scope>FUNCTION</scope>
    <scope>PATHWAY</scope>
    <scope>DOMAIN</scope>
    <source>
        <strain>A-8890</strain>
    </source>
</reference>
<reference key="2">
    <citation type="journal article" date="2010" name="ChemBioChem">
        <authorList>
            <person name="Kudo F."/>
            <person name="Motegi A."/>
            <person name="Mizoue K."/>
            <person name="Eguchi T."/>
        </authorList>
    </citation>
    <scope>ERRATUM OF PUBMED:20589823</scope>
</reference>
<reference key="3">
    <citation type="journal article" date="1994" name="J. Antibiot.">
        <title>Isolation and characterization of new 18-membered macrolides FD-891 and FD-892.</title>
        <authorList>
            <person name="Seki-Asano M."/>
            <person name="Okazaki T."/>
            <person name="Yamagishi M."/>
            <person name="Sakai N."/>
            <person name="Hanada K."/>
            <person name="Mizoue K."/>
        </authorList>
    </citation>
    <scope>ANTIBIOTIC ISOLATION AND ACTIVITY CHARACTERIZATION AGAINST HUMAN CELL LINES</scope>
    <source>
        <strain>A-8890</strain>
    </source>
</reference>
<reference key="4">
    <citation type="journal article" date="2005" name="J. Gen. Plant Pathol.">
        <title>Phytotoxin produced by Streptomyces sp. causing potato russet scab in Japan.</title>
        <authorList>
            <person name="Natsume M."/>
            <person name="Komiya M."/>
            <person name="Koyanagi F."/>
            <person name="Tashiro N."/>
            <person name="Kawaide H."/>
            <person name="Abe H."/>
        </authorList>
    </citation>
    <scope>ANTIBIOTIC ISOLATION AND ACTIVITY CHARACTERIZATION AGAINST PLANTS</scope>
</reference>
<proteinExistence type="evidence at protein level"/>
<feature type="chain" id="PRO_0000461664" description="Polyketide synthase GfsB">
    <location>
        <begin position="1"/>
        <end position="5571"/>
    </location>
</feature>
<feature type="domain" description="Ketosynthase family 3 (KS3) 1" evidence="4">
    <location>
        <begin position="57"/>
        <end position="483"/>
    </location>
</feature>
<feature type="domain" description="Malonyl-CoA:ACP transacylase (MAT) 1" evidence="2">
    <location>
        <begin position="611"/>
        <end position="926"/>
    </location>
</feature>
<feature type="domain" description="PKS/mFAS DH 1" evidence="5">
    <location>
        <begin position="976"/>
        <end position="1264"/>
    </location>
</feature>
<feature type="domain" description="Enoyl reductase (ER)" evidence="2">
    <location>
        <begin position="1478"/>
        <end position="1777"/>
    </location>
</feature>
<feature type="domain" description="Ketoreductase (KR) 1" evidence="2">
    <location>
        <begin position="1787"/>
        <end position="1966"/>
    </location>
</feature>
<feature type="domain" description="Carrier 1" evidence="3">
    <location>
        <begin position="2073"/>
        <end position="2148"/>
    </location>
</feature>
<feature type="domain" description="Ketosynthase family 3 (KS3) 2" evidence="4">
    <location>
        <begin position="2167"/>
        <end position="2593"/>
    </location>
</feature>
<feature type="domain" description="Malonyl-CoA:ACP transacylase (MAT) 2" evidence="2">
    <location>
        <begin position="2710"/>
        <end position="3016"/>
    </location>
</feature>
<feature type="domain" description="Ketoreductase (KR) 2" evidence="2">
    <location>
        <begin position="3373"/>
        <end position="3551"/>
    </location>
</feature>
<feature type="domain" description="Carrier 2" evidence="3">
    <location>
        <begin position="3653"/>
        <end position="3728"/>
    </location>
</feature>
<feature type="domain" description="Ketosynthase family 3 (KS3) 3" evidence="4">
    <location>
        <begin position="3746"/>
        <end position="4172"/>
    </location>
</feature>
<feature type="domain" description="Malonyl-CoA:ACP transacylase (MAT) 3" evidence="2">
    <location>
        <begin position="4279"/>
        <end position="4601"/>
    </location>
</feature>
<feature type="domain" description="PKS/mFAS DH 2" evidence="5">
    <location>
        <begin position="4649"/>
        <end position="4931"/>
    </location>
</feature>
<feature type="domain" description="Ketoreductase (KR) 3" evidence="2">
    <location>
        <begin position="5134"/>
        <end position="5306"/>
    </location>
</feature>
<feature type="domain" description="Carrier 3" evidence="3">
    <location>
        <begin position="5410"/>
        <end position="5485"/>
    </location>
</feature>
<feature type="region of interest" description="Disordered" evidence="6">
    <location>
        <begin position="1"/>
        <end position="27"/>
    </location>
</feature>
<feature type="region of interest" description="Module 5" evidence="12">
    <location>
        <begin position="57"/>
        <end position="2148"/>
    </location>
</feature>
<feature type="region of interest" description="Disordered" evidence="6">
    <location>
        <begin position="485"/>
        <end position="518"/>
    </location>
</feature>
<feature type="region of interest" description="N-terminal hotdog fold 1" evidence="5">
    <location>
        <begin position="976"/>
        <end position="1109"/>
    </location>
</feature>
<feature type="region of interest" description="C-terminal hotdog fold 1" evidence="5">
    <location>
        <begin position="1122"/>
        <end position="1264"/>
    </location>
</feature>
<feature type="region of interest" description="Module 6" evidence="12">
    <location>
        <begin position="2167"/>
        <end position="3728"/>
    </location>
</feature>
<feature type="region of interest" description="Module 7" evidence="12">
    <location>
        <begin position="3746"/>
        <end position="5485"/>
    </location>
</feature>
<feature type="region of interest" description="N-terminal hotdog fold 2" evidence="5">
    <location>
        <begin position="4649"/>
        <end position="4774"/>
    </location>
</feature>
<feature type="region of interest" description="C-terminal hotdog fold 2" evidence="5">
    <location>
        <begin position="4787"/>
        <end position="4931"/>
    </location>
</feature>
<feature type="compositionally biased region" description="Basic and acidic residues" evidence="6">
    <location>
        <begin position="18"/>
        <end position="27"/>
    </location>
</feature>
<feature type="active site" description="For beta-ketoacyl synthase 1 activity" evidence="4">
    <location>
        <position position="230"/>
    </location>
</feature>
<feature type="active site" description="For beta-ketoacyl synthase 1 activity" evidence="4">
    <location>
        <position position="365"/>
    </location>
</feature>
<feature type="active site" description="For beta-ketoacyl synthase 1 activity" evidence="4">
    <location>
        <position position="405"/>
    </location>
</feature>
<feature type="active site" description="Proton acceptor; for dehydratase activity 1" evidence="5">
    <location>
        <position position="1008"/>
    </location>
</feature>
<feature type="active site" description="Proton donor; for dehydratase activity 1" evidence="5">
    <location>
        <position position="1183"/>
    </location>
</feature>
<feature type="active site" description="For beta-ketoacyl synthase 2 activity" evidence="4">
    <location>
        <position position="2340"/>
    </location>
</feature>
<feature type="active site" description="For beta-ketoacyl synthase 2 activity" evidence="4">
    <location>
        <position position="2475"/>
    </location>
</feature>
<feature type="active site" description="For beta-ketoacyl synthase 2 activity" evidence="4">
    <location>
        <position position="2515"/>
    </location>
</feature>
<feature type="active site" description="For beta-ketoacyl synthase 3 activity" evidence="4">
    <location>
        <position position="3919"/>
    </location>
</feature>
<feature type="active site" description="For beta-ketoacyl synthase 3 activity" evidence="4">
    <location>
        <position position="4054"/>
    </location>
</feature>
<feature type="active site" description="For beta-ketoacyl synthase 3 activity" evidence="4">
    <location>
        <position position="4094"/>
    </location>
</feature>
<feature type="active site" description="Proton acceptor; for dehydratase activity 2" evidence="5">
    <location>
        <position position="4681"/>
    </location>
</feature>
<feature type="active site" description="Proton donor; for dehydratase activity 2" evidence="5">
    <location>
        <position position="4848"/>
    </location>
</feature>
<feature type="modified residue" description="O-(pantetheine 4'-phosphoryl)serine" evidence="3">
    <location>
        <position position="2108"/>
    </location>
</feature>
<feature type="modified residue" description="O-(pantetheine 4'-phosphoryl)serine" evidence="3">
    <location>
        <position position="3688"/>
    </location>
</feature>
<feature type="modified residue" description="O-(pantetheine 4'-phosphoryl)serine" evidence="3">
    <location>
        <position position="5445"/>
    </location>
</feature>
<comment type="function">
    <text evidence="7 12">Second protein in the synthesis of the 16-membered macrolide antibiotics FD-891 and FD-892 (PubMed:20589823). Composed of 3 modules (PubMed:20589823). Modifies the product of GfsA by multiple rounds of addition of malonyl-CoA or methylmalonyl-CoA and other modifications to help generate the final products (Probable) (PubMed:20589823).</text>
</comment>
<comment type="cofactor">
    <cofactor evidence="3">
        <name>pantetheine 4'-phosphate</name>
        <dbReference type="ChEBI" id="CHEBI:47942"/>
    </cofactor>
    <text evidence="3">Binds 3 phosphopantetheines covalently.</text>
</comment>
<comment type="pathway">
    <text evidence="12">Antibiotic biosynthesis.</text>
</comment>
<comment type="domain">
    <text evidence="12">Type I modular polyketide synthases (PKS) catalyze the step-wise condensation of simple carboxylic acid derivatives. Type I PKSs are arranged into modules, where each module is comprised of a set of catalytic activities responsible for a single elongation of the polyketide chain and the appropriate reductive processing of the beta-keto functionality. A minimal elongation module contains a ketosynthase (KS) domain, an acyl transferase (AT) domain, and an acyl-carrier protein (ACP) domain. Optional modification (ketoreductase, dehydratase and enoylreductase) domains may also be present.</text>
</comment>
<comment type="miscellaneous">
    <text evidence="8 9">The macrolide antibiotics FD-891 and FD-892 induce morphological changes of human promyelocytic leukemia (HL-60) cells and have cytocidal activity against tumor cell lines in vitro (PubMed:8002384). FD-891 produced by Streptomyces sp. MAFF 225003 and MAFF 225006 inhibits growth of rice and alfalfa seedlings and may cause russet scab in potatoes (Ref.4).</text>
</comment>
<gene>
    <name evidence="10" type="primary">gfsB</name>
</gene>
<dbReference type="EC" id="2.3.1.-" evidence="1"/>
<dbReference type="EMBL" id="AB469193">
    <property type="protein sequence ID" value="BAJ16468.1"/>
    <property type="molecule type" value="Genomic_DNA"/>
</dbReference>
<dbReference type="GO" id="GO:0004315">
    <property type="term" value="F:3-oxoacyl-[acyl-carrier-protein] synthase activity"/>
    <property type="evidence" value="ECO:0007669"/>
    <property type="project" value="InterPro"/>
</dbReference>
<dbReference type="GO" id="GO:0004312">
    <property type="term" value="F:fatty acid synthase activity"/>
    <property type="evidence" value="ECO:0007669"/>
    <property type="project" value="TreeGrafter"/>
</dbReference>
<dbReference type="GO" id="GO:0016491">
    <property type="term" value="F:oxidoreductase activity"/>
    <property type="evidence" value="ECO:0007669"/>
    <property type="project" value="InterPro"/>
</dbReference>
<dbReference type="GO" id="GO:0031177">
    <property type="term" value="F:phosphopantetheine binding"/>
    <property type="evidence" value="ECO:0007669"/>
    <property type="project" value="InterPro"/>
</dbReference>
<dbReference type="GO" id="GO:0008270">
    <property type="term" value="F:zinc ion binding"/>
    <property type="evidence" value="ECO:0007669"/>
    <property type="project" value="InterPro"/>
</dbReference>
<dbReference type="GO" id="GO:0006633">
    <property type="term" value="P:fatty acid biosynthetic process"/>
    <property type="evidence" value="ECO:0007669"/>
    <property type="project" value="InterPro"/>
</dbReference>
<dbReference type="GO" id="GO:0033068">
    <property type="term" value="P:macrolide biosynthetic process"/>
    <property type="evidence" value="ECO:0007669"/>
    <property type="project" value="UniProtKB-ARBA"/>
</dbReference>
<dbReference type="CDD" id="cd05195">
    <property type="entry name" value="enoyl_red"/>
    <property type="match status" value="1"/>
</dbReference>
<dbReference type="CDD" id="cd08952">
    <property type="entry name" value="KR_1_SDR_x"/>
    <property type="match status" value="1"/>
</dbReference>
<dbReference type="CDD" id="cd08956">
    <property type="entry name" value="KR_3_FAS_SDR_x"/>
    <property type="match status" value="2"/>
</dbReference>
<dbReference type="CDD" id="cd00833">
    <property type="entry name" value="PKS"/>
    <property type="match status" value="3"/>
</dbReference>
<dbReference type="FunFam" id="3.40.50.720:FF:000209">
    <property type="entry name" value="Polyketide synthase Pks12"/>
    <property type="match status" value="1"/>
</dbReference>
<dbReference type="FunFam" id="3.40.47.10:FF:000019">
    <property type="entry name" value="Polyketide synthase type I"/>
    <property type="match status" value="3"/>
</dbReference>
<dbReference type="FunFam" id="3.40.366.10:FF:000002">
    <property type="entry name" value="Probable polyketide synthase 2"/>
    <property type="match status" value="2"/>
</dbReference>
<dbReference type="FunFam" id="3.90.180.10:FF:000032">
    <property type="entry name" value="Probable polyketide synthase pks1"/>
    <property type="match status" value="1"/>
</dbReference>
<dbReference type="FunFam" id="1.10.1200.10:FF:000007">
    <property type="entry name" value="Probable polyketide synthase pks17"/>
    <property type="match status" value="3"/>
</dbReference>
<dbReference type="Gene3D" id="3.30.70.3290">
    <property type="match status" value="3"/>
</dbReference>
<dbReference type="Gene3D" id="3.40.47.10">
    <property type="match status" value="3"/>
</dbReference>
<dbReference type="Gene3D" id="3.40.50.11460">
    <property type="match status" value="1"/>
</dbReference>
<dbReference type="Gene3D" id="6.10.140.1830">
    <property type="match status" value="1"/>
</dbReference>
<dbReference type="Gene3D" id="1.10.1200.10">
    <property type="entry name" value="ACP-like"/>
    <property type="match status" value="3"/>
</dbReference>
<dbReference type="Gene3D" id="3.40.366.10">
    <property type="entry name" value="Malonyl-Coenzyme A Acyl Carrier Protein, domain 2"/>
    <property type="match status" value="3"/>
</dbReference>
<dbReference type="Gene3D" id="3.90.180.10">
    <property type="entry name" value="Medium-chain alcohol dehydrogenases, catalytic domain"/>
    <property type="match status" value="1"/>
</dbReference>
<dbReference type="Gene3D" id="3.40.50.720">
    <property type="entry name" value="NAD(P)-binding Rossmann-like Domain"/>
    <property type="match status" value="3"/>
</dbReference>
<dbReference type="Gene3D" id="3.10.129.110">
    <property type="entry name" value="Polyketide synthase dehydratase"/>
    <property type="match status" value="2"/>
</dbReference>
<dbReference type="InterPro" id="IPR001227">
    <property type="entry name" value="Ac_transferase_dom_sf"/>
</dbReference>
<dbReference type="InterPro" id="IPR036736">
    <property type="entry name" value="ACP-like_sf"/>
</dbReference>
<dbReference type="InterPro" id="IPR014043">
    <property type="entry name" value="Acyl_transferase_dom"/>
</dbReference>
<dbReference type="InterPro" id="IPR016035">
    <property type="entry name" value="Acyl_Trfase/lysoPLipase"/>
</dbReference>
<dbReference type="InterPro" id="IPR013154">
    <property type="entry name" value="ADH-like_N"/>
</dbReference>
<dbReference type="InterPro" id="IPR011032">
    <property type="entry name" value="GroES-like_sf"/>
</dbReference>
<dbReference type="InterPro" id="IPR018201">
    <property type="entry name" value="Ketoacyl_synth_AS"/>
</dbReference>
<dbReference type="InterPro" id="IPR014031">
    <property type="entry name" value="Ketoacyl_synth_C"/>
</dbReference>
<dbReference type="InterPro" id="IPR014030">
    <property type="entry name" value="Ketoacyl_synth_N"/>
</dbReference>
<dbReference type="InterPro" id="IPR016036">
    <property type="entry name" value="Malonyl_transacylase_ACP-bd"/>
</dbReference>
<dbReference type="InterPro" id="IPR036291">
    <property type="entry name" value="NAD(P)-bd_dom_sf"/>
</dbReference>
<dbReference type="InterPro" id="IPR015083">
    <property type="entry name" value="NorB/c/GfsB-D-like_docking"/>
</dbReference>
<dbReference type="InterPro" id="IPR032821">
    <property type="entry name" value="PKS_assoc"/>
</dbReference>
<dbReference type="InterPro" id="IPR020841">
    <property type="entry name" value="PKS_Beta-ketoAc_synthase_dom"/>
</dbReference>
<dbReference type="InterPro" id="IPR041618">
    <property type="entry name" value="PKS_DE"/>
</dbReference>
<dbReference type="InterPro" id="IPR042104">
    <property type="entry name" value="PKS_dehydratase_sf"/>
</dbReference>
<dbReference type="InterPro" id="IPR020807">
    <property type="entry name" value="PKS_DH"/>
</dbReference>
<dbReference type="InterPro" id="IPR049551">
    <property type="entry name" value="PKS_DH_C"/>
</dbReference>
<dbReference type="InterPro" id="IPR049552">
    <property type="entry name" value="PKS_DH_N"/>
</dbReference>
<dbReference type="InterPro" id="IPR020843">
    <property type="entry name" value="PKS_ER"/>
</dbReference>
<dbReference type="InterPro" id="IPR013968">
    <property type="entry name" value="PKS_KR"/>
</dbReference>
<dbReference type="InterPro" id="IPR049900">
    <property type="entry name" value="PKS_mFAS_DH"/>
</dbReference>
<dbReference type="InterPro" id="IPR050091">
    <property type="entry name" value="PKS_NRPS_Biosynth_Enz"/>
</dbReference>
<dbReference type="InterPro" id="IPR020806">
    <property type="entry name" value="PKS_PP-bd"/>
</dbReference>
<dbReference type="InterPro" id="IPR036299">
    <property type="entry name" value="Polyketide_synth_docking_sf"/>
</dbReference>
<dbReference type="InterPro" id="IPR009081">
    <property type="entry name" value="PP-bd_ACP"/>
</dbReference>
<dbReference type="InterPro" id="IPR006162">
    <property type="entry name" value="Ppantetheine_attach_site"/>
</dbReference>
<dbReference type="InterPro" id="IPR002364">
    <property type="entry name" value="Quin_OxRdtase/zeta-crystal_CS"/>
</dbReference>
<dbReference type="InterPro" id="IPR055123">
    <property type="entry name" value="SpnB-like_Rossmann"/>
</dbReference>
<dbReference type="InterPro" id="IPR016039">
    <property type="entry name" value="Thiolase-like"/>
</dbReference>
<dbReference type="NCBIfam" id="NF045894">
    <property type="entry name" value="PKS_plus_SDR"/>
    <property type="match status" value="1"/>
</dbReference>
<dbReference type="PANTHER" id="PTHR43775">
    <property type="entry name" value="FATTY ACID SYNTHASE"/>
    <property type="match status" value="1"/>
</dbReference>
<dbReference type="PANTHER" id="PTHR43775:SF51">
    <property type="entry name" value="INACTIVE PHENOLPHTHIOCEROL SYNTHESIS POLYKETIDE SYNTHASE TYPE I PKS1-RELATED"/>
    <property type="match status" value="1"/>
</dbReference>
<dbReference type="Pfam" id="PF00698">
    <property type="entry name" value="Acyl_transf_1"/>
    <property type="match status" value="3"/>
</dbReference>
<dbReference type="Pfam" id="PF08240">
    <property type="entry name" value="ADH_N"/>
    <property type="match status" value="1"/>
</dbReference>
<dbReference type="Pfam" id="PF13602">
    <property type="entry name" value="ADH_zinc_N_2"/>
    <property type="match status" value="1"/>
</dbReference>
<dbReference type="Pfam" id="PF08990">
    <property type="entry name" value="Docking"/>
    <property type="match status" value="1"/>
</dbReference>
<dbReference type="Pfam" id="PF16197">
    <property type="entry name" value="KAsynt_C_assoc"/>
    <property type="match status" value="3"/>
</dbReference>
<dbReference type="Pfam" id="PF00109">
    <property type="entry name" value="ketoacyl-synt"/>
    <property type="match status" value="3"/>
</dbReference>
<dbReference type="Pfam" id="PF02801">
    <property type="entry name" value="Ketoacyl-synt_C"/>
    <property type="match status" value="3"/>
</dbReference>
<dbReference type="Pfam" id="PF08659">
    <property type="entry name" value="KR"/>
    <property type="match status" value="3"/>
</dbReference>
<dbReference type="Pfam" id="PF18369">
    <property type="entry name" value="PKS_DE"/>
    <property type="match status" value="1"/>
</dbReference>
<dbReference type="Pfam" id="PF21089">
    <property type="entry name" value="PKS_DH_N"/>
    <property type="match status" value="2"/>
</dbReference>
<dbReference type="Pfam" id="PF00550">
    <property type="entry name" value="PP-binding"/>
    <property type="match status" value="3"/>
</dbReference>
<dbReference type="Pfam" id="PF14765">
    <property type="entry name" value="PS-DH"/>
    <property type="match status" value="2"/>
</dbReference>
<dbReference type="Pfam" id="PF22953">
    <property type="entry name" value="SpnB_Rossmann"/>
    <property type="match status" value="2"/>
</dbReference>
<dbReference type="SMART" id="SM00827">
    <property type="entry name" value="PKS_AT"/>
    <property type="match status" value="3"/>
</dbReference>
<dbReference type="SMART" id="SM00826">
    <property type="entry name" value="PKS_DH"/>
    <property type="match status" value="2"/>
</dbReference>
<dbReference type="SMART" id="SM00829">
    <property type="entry name" value="PKS_ER"/>
    <property type="match status" value="1"/>
</dbReference>
<dbReference type="SMART" id="SM00822">
    <property type="entry name" value="PKS_KR"/>
    <property type="match status" value="3"/>
</dbReference>
<dbReference type="SMART" id="SM00825">
    <property type="entry name" value="PKS_KS"/>
    <property type="match status" value="3"/>
</dbReference>
<dbReference type="SMART" id="SM00823">
    <property type="entry name" value="PKS_PP"/>
    <property type="match status" value="3"/>
</dbReference>
<dbReference type="SMART" id="SM01294">
    <property type="entry name" value="PKS_PP_betabranch"/>
    <property type="match status" value="3"/>
</dbReference>
<dbReference type="SUPFAM" id="SSF47336">
    <property type="entry name" value="ACP-like"/>
    <property type="match status" value="3"/>
</dbReference>
<dbReference type="SUPFAM" id="SSF101173">
    <property type="entry name" value="Docking domain B of the erythromycin polyketide synthase (DEBS)"/>
    <property type="match status" value="1"/>
</dbReference>
<dbReference type="SUPFAM" id="SSF52151">
    <property type="entry name" value="FabD/lysophospholipase-like"/>
    <property type="match status" value="3"/>
</dbReference>
<dbReference type="SUPFAM" id="SSF50129">
    <property type="entry name" value="GroES-like"/>
    <property type="match status" value="1"/>
</dbReference>
<dbReference type="SUPFAM" id="SSF51735">
    <property type="entry name" value="NAD(P)-binding Rossmann-fold domains"/>
    <property type="match status" value="7"/>
</dbReference>
<dbReference type="SUPFAM" id="SSF55048">
    <property type="entry name" value="Probable ACP-binding domain of malonyl-CoA ACP transacylase"/>
    <property type="match status" value="3"/>
</dbReference>
<dbReference type="SUPFAM" id="SSF53901">
    <property type="entry name" value="Thiolase-like"/>
    <property type="match status" value="3"/>
</dbReference>
<dbReference type="PROSITE" id="PS50075">
    <property type="entry name" value="CARRIER"/>
    <property type="match status" value="3"/>
</dbReference>
<dbReference type="PROSITE" id="PS00606">
    <property type="entry name" value="KS3_1"/>
    <property type="match status" value="3"/>
</dbReference>
<dbReference type="PROSITE" id="PS52004">
    <property type="entry name" value="KS3_2"/>
    <property type="match status" value="3"/>
</dbReference>
<dbReference type="PROSITE" id="PS00012">
    <property type="entry name" value="PHOSPHOPANTETHEINE"/>
    <property type="match status" value="3"/>
</dbReference>
<dbReference type="PROSITE" id="PS52019">
    <property type="entry name" value="PKS_MFAS_DH"/>
    <property type="match status" value="2"/>
</dbReference>
<dbReference type="PROSITE" id="PS01162">
    <property type="entry name" value="QOR_ZETA_CRYSTAL"/>
    <property type="match status" value="1"/>
</dbReference>
<keyword id="KW-0012">Acyltransferase</keyword>
<keyword id="KW-0045">Antibiotic biosynthesis</keyword>
<keyword id="KW-0511">Multifunctional enzyme</keyword>
<keyword id="KW-0596">Phosphopantetheine</keyword>
<keyword id="KW-0597">Phosphoprotein</keyword>
<keyword id="KW-0677">Repeat</keyword>
<keyword id="KW-0808">Transferase</keyword>
<name>GFSB_STRHA</name>
<accession>E0D203</accession>
<evidence type="ECO:0000250" key="1">
    <source>
        <dbReference type="UniProtKB" id="I6XD69"/>
    </source>
</evidence>
<evidence type="ECO:0000255" key="2"/>
<evidence type="ECO:0000255" key="3">
    <source>
        <dbReference type="PROSITE-ProRule" id="PRU00258"/>
    </source>
</evidence>
<evidence type="ECO:0000255" key="4">
    <source>
        <dbReference type="PROSITE-ProRule" id="PRU01348"/>
    </source>
</evidence>
<evidence type="ECO:0000255" key="5">
    <source>
        <dbReference type="PROSITE-ProRule" id="PRU01363"/>
    </source>
</evidence>
<evidence type="ECO:0000256" key="6">
    <source>
        <dbReference type="SAM" id="MobiDB-lite"/>
    </source>
</evidence>
<evidence type="ECO:0000269" key="7">
    <source>
    </source>
</evidence>
<evidence type="ECO:0000269" key="8">
    <source>
    </source>
</evidence>
<evidence type="ECO:0000269" key="9">
    <source ref="4"/>
</evidence>
<evidence type="ECO:0000303" key="10">
    <source>
    </source>
</evidence>
<evidence type="ECO:0000305" key="11"/>
<evidence type="ECO:0000305" key="12">
    <source>
    </source>
</evidence>
<evidence type="ECO:0000312" key="13">
    <source>
        <dbReference type="EMBL" id="BAJ16468.1"/>
    </source>
</evidence>
<organism>
    <name type="scientific">Streptomyces halstedii</name>
    <dbReference type="NCBI Taxonomy" id="1944"/>
    <lineage>
        <taxon>Bacteria</taxon>
        <taxon>Bacillati</taxon>
        <taxon>Actinomycetota</taxon>
        <taxon>Actinomycetes</taxon>
        <taxon>Kitasatosporales</taxon>
        <taxon>Streptomycetaceae</taxon>
        <taxon>Streptomyces</taxon>
    </lineage>
</organism>